<feature type="chain" id="PRO_0000378606" description="DM7 family protein GE17491">
    <location>
        <begin position="1"/>
        <end position="534"/>
    </location>
</feature>
<comment type="similarity">
    <text evidence="1">Belongs to the DM7 family.</text>
</comment>
<accession>B4Q0P1</accession>
<sequence length="534" mass="59254">MLQVQAVHRDEKQAVKLKKTTYLPYLFNLVLPKMFYPNRIVVARLYTDVHEHDKQAAEYFEGFQTPCFEVPASLFPGEAPLDKIVFMPTVMLPMGFEAGGVFGPGVLPRRSYPIDLMASGHKGQTPPLFVGLRSLYVQLPSGIESFLDTVVDNAAGQDALVYGSCQPGNHPSKGEQSKELMHSNDCSLSIAYNLPAPPTPPSPYPFPPLPVQYNIYTPDLSNVHMLMLQQRNPTVALLSTVNHPHVPAVAFATMGDEECPKFELPSDIFPICEGVNRPIFLPRRFLPKGFDAGCVFKPASLPKLWFVKHIGGFNRPQPQHNNAITPPLFVGKISLVVGAHHLAKELQRQGEQKAQSEGAEGGSLKVVEPNGGFIPVTQGFMVMETEQQTPPRGAYSLESYQEASEKGCVVRAIKDEAIEATDTLLSKLASKPEDMQKKYLSCFKVDSDIDLMAEAMADMGTAEMSLLAKRETLPGVDGPRALDQLRQVVEDRSQIRSHTDQLIQDHIYRMDRNRMLALRQPFAPWFGCGTIERK</sequence>
<dbReference type="EMBL" id="CM000162">
    <property type="protein sequence ID" value="EDX02312.1"/>
    <property type="molecule type" value="Genomic_DNA"/>
</dbReference>
<dbReference type="SMR" id="B4Q0P1"/>
<dbReference type="EnsemblMetazoa" id="FBtr0264009">
    <property type="protein sequence ID" value="FBpp0262501"/>
    <property type="gene ID" value="FBgn0234954"/>
</dbReference>
<dbReference type="EnsemblMetazoa" id="XM_002101168.3">
    <property type="protein sequence ID" value="XP_002101204.1"/>
    <property type="gene ID" value="LOC6525368"/>
</dbReference>
<dbReference type="GeneID" id="6525368"/>
<dbReference type="KEGG" id="dya:Dyak_GE17491"/>
<dbReference type="eggNOG" id="ENOG502QRB1">
    <property type="taxonomic scope" value="Eukaryota"/>
</dbReference>
<dbReference type="HOGENOM" id="CLU_477581_0_0_1"/>
<dbReference type="OMA" id="NTADYQS"/>
<dbReference type="OrthoDB" id="7867651at2759"/>
<dbReference type="PhylomeDB" id="B4Q0P1"/>
<dbReference type="Proteomes" id="UP000002282">
    <property type="component" value="Chromosome X"/>
</dbReference>
<dbReference type="InterPro" id="IPR006610">
    <property type="entry name" value="DM7"/>
</dbReference>
<dbReference type="SMART" id="SM00688">
    <property type="entry name" value="DM7"/>
    <property type="match status" value="2"/>
</dbReference>
<organism>
    <name type="scientific">Drosophila yakuba</name>
    <name type="common">Fruit fly</name>
    <dbReference type="NCBI Taxonomy" id="7245"/>
    <lineage>
        <taxon>Eukaryota</taxon>
        <taxon>Metazoa</taxon>
        <taxon>Ecdysozoa</taxon>
        <taxon>Arthropoda</taxon>
        <taxon>Hexapoda</taxon>
        <taxon>Insecta</taxon>
        <taxon>Pterygota</taxon>
        <taxon>Neoptera</taxon>
        <taxon>Endopterygota</taxon>
        <taxon>Diptera</taxon>
        <taxon>Brachycera</taxon>
        <taxon>Muscomorpha</taxon>
        <taxon>Ephydroidea</taxon>
        <taxon>Drosophilidae</taxon>
        <taxon>Drosophila</taxon>
        <taxon>Sophophora</taxon>
    </lineage>
</organism>
<evidence type="ECO:0000255" key="1"/>
<evidence type="ECO:0000312" key="2">
    <source>
        <dbReference type="EMBL" id="EDX02312.1"/>
    </source>
</evidence>
<name>DM7A_DROYA</name>
<protein>
    <recommendedName>
        <fullName>DM7 family protein GE17491</fullName>
    </recommendedName>
</protein>
<keyword id="KW-0677">Repeat</keyword>
<gene>
    <name type="ORF">GE17491</name>
</gene>
<proteinExistence type="inferred from homology"/>
<reference evidence="2" key="1">
    <citation type="journal article" date="2007" name="Nature">
        <title>Evolution of genes and genomes on the Drosophila phylogeny.</title>
        <authorList>
            <consortium name="Drosophila 12 genomes consortium"/>
        </authorList>
    </citation>
    <scope>NUCLEOTIDE SEQUENCE [LARGE SCALE GENOMIC DNA]</scope>
    <source>
        <strain evidence="2">Tai18E2 / Tucson 14021-0261.01</strain>
    </source>
</reference>